<reference key="1">
    <citation type="journal article" date="1997" name="Nature">
        <title>The nucleotide sequence of Saccharomyces cerevisiae chromosome IV.</title>
        <authorList>
            <person name="Jacq C."/>
            <person name="Alt-Moerbe J."/>
            <person name="Andre B."/>
            <person name="Arnold W."/>
            <person name="Bahr A."/>
            <person name="Ballesta J.P.G."/>
            <person name="Bargues M."/>
            <person name="Baron L."/>
            <person name="Becker A."/>
            <person name="Biteau N."/>
            <person name="Bloecker H."/>
            <person name="Blugeon C."/>
            <person name="Boskovic J."/>
            <person name="Brandt P."/>
            <person name="Brueckner M."/>
            <person name="Buitrago M.J."/>
            <person name="Coster F."/>
            <person name="Delaveau T."/>
            <person name="del Rey F."/>
            <person name="Dujon B."/>
            <person name="Eide L.G."/>
            <person name="Garcia-Cantalejo J.M."/>
            <person name="Goffeau A."/>
            <person name="Gomez-Peris A."/>
            <person name="Granotier C."/>
            <person name="Hanemann V."/>
            <person name="Hankeln T."/>
            <person name="Hoheisel J.D."/>
            <person name="Jaeger W."/>
            <person name="Jimenez A."/>
            <person name="Jonniaux J.-L."/>
            <person name="Kraemer C."/>
            <person name="Kuester H."/>
            <person name="Laamanen P."/>
            <person name="Legros Y."/>
            <person name="Louis E.J."/>
            <person name="Moeller-Rieker S."/>
            <person name="Monnet A."/>
            <person name="Moro M."/>
            <person name="Mueller-Auer S."/>
            <person name="Nussbaumer B."/>
            <person name="Paricio N."/>
            <person name="Paulin L."/>
            <person name="Perea J."/>
            <person name="Perez-Alonso M."/>
            <person name="Perez-Ortin J.E."/>
            <person name="Pohl T.M."/>
            <person name="Prydz H."/>
            <person name="Purnelle B."/>
            <person name="Rasmussen S.W."/>
            <person name="Remacha M.A."/>
            <person name="Revuelta J.L."/>
            <person name="Rieger M."/>
            <person name="Salom D."/>
            <person name="Saluz H.P."/>
            <person name="Saiz J.E."/>
            <person name="Saren A.-M."/>
            <person name="Schaefer M."/>
            <person name="Scharfe M."/>
            <person name="Schmidt E.R."/>
            <person name="Schneider C."/>
            <person name="Scholler P."/>
            <person name="Schwarz S."/>
            <person name="Soler-Mira A."/>
            <person name="Urrestarazu L.A."/>
            <person name="Verhasselt P."/>
            <person name="Vissers S."/>
            <person name="Voet M."/>
            <person name="Volckaert G."/>
            <person name="Wagner G."/>
            <person name="Wambutt R."/>
            <person name="Wedler E."/>
            <person name="Wedler H."/>
            <person name="Woelfl S."/>
            <person name="Harris D.E."/>
            <person name="Bowman S."/>
            <person name="Brown D."/>
            <person name="Churcher C.M."/>
            <person name="Connor R."/>
            <person name="Dedman K."/>
            <person name="Gentles S."/>
            <person name="Hamlin N."/>
            <person name="Hunt S."/>
            <person name="Jones L."/>
            <person name="McDonald S."/>
            <person name="Murphy L.D."/>
            <person name="Niblett D."/>
            <person name="Odell C."/>
            <person name="Oliver K."/>
            <person name="Rajandream M.A."/>
            <person name="Richards C."/>
            <person name="Shore L."/>
            <person name="Walsh S.V."/>
            <person name="Barrell B.G."/>
            <person name="Dietrich F.S."/>
            <person name="Mulligan J.T."/>
            <person name="Allen E."/>
            <person name="Araujo R."/>
            <person name="Aviles E."/>
            <person name="Berno A."/>
            <person name="Carpenter J."/>
            <person name="Chen E."/>
            <person name="Cherry J.M."/>
            <person name="Chung E."/>
            <person name="Duncan M."/>
            <person name="Hunicke-Smith S."/>
            <person name="Hyman R.W."/>
            <person name="Komp C."/>
            <person name="Lashkari D."/>
            <person name="Lew H."/>
            <person name="Lin D."/>
            <person name="Mosedale D."/>
            <person name="Nakahara K."/>
            <person name="Namath A."/>
            <person name="Oefner P."/>
            <person name="Oh C."/>
            <person name="Petel F.X."/>
            <person name="Roberts D."/>
            <person name="Schramm S."/>
            <person name="Schroeder M."/>
            <person name="Shogren T."/>
            <person name="Shroff N."/>
            <person name="Winant A."/>
            <person name="Yelton M.A."/>
            <person name="Botstein D."/>
            <person name="Davis R.W."/>
            <person name="Johnston M."/>
            <person name="Andrews S."/>
            <person name="Brinkman R."/>
            <person name="Cooper J."/>
            <person name="Ding H."/>
            <person name="Du Z."/>
            <person name="Favello A."/>
            <person name="Fulton L."/>
            <person name="Gattung S."/>
            <person name="Greco T."/>
            <person name="Hallsworth K."/>
            <person name="Hawkins J."/>
            <person name="Hillier L.W."/>
            <person name="Jier M."/>
            <person name="Johnson D."/>
            <person name="Johnston L."/>
            <person name="Kirsten J."/>
            <person name="Kucaba T."/>
            <person name="Langston Y."/>
            <person name="Latreille P."/>
            <person name="Le T."/>
            <person name="Mardis E."/>
            <person name="Menezes S."/>
            <person name="Miller N."/>
            <person name="Nhan M."/>
            <person name="Pauley A."/>
            <person name="Peluso D."/>
            <person name="Rifkin L."/>
            <person name="Riles L."/>
            <person name="Taich A."/>
            <person name="Trevaskis E."/>
            <person name="Vignati D."/>
            <person name="Wilcox L."/>
            <person name="Wohldman P."/>
            <person name="Vaudin M."/>
            <person name="Wilson R."/>
            <person name="Waterston R."/>
            <person name="Albermann K."/>
            <person name="Hani J."/>
            <person name="Heumann K."/>
            <person name="Kleine K."/>
            <person name="Mewes H.-W."/>
            <person name="Zollner A."/>
            <person name="Zaccaria P."/>
        </authorList>
    </citation>
    <scope>NUCLEOTIDE SEQUENCE [LARGE SCALE GENOMIC DNA]</scope>
    <source>
        <strain>ATCC 204508 / S288c</strain>
    </source>
</reference>
<reference key="2">
    <citation type="journal article" date="2014" name="G3 (Bethesda)">
        <title>The reference genome sequence of Saccharomyces cerevisiae: Then and now.</title>
        <authorList>
            <person name="Engel S.R."/>
            <person name="Dietrich F.S."/>
            <person name="Fisk D.G."/>
            <person name="Binkley G."/>
            <person name="Balakrishnan R."/>
            <person name="Costanzo M.C."/>
            <person name="Dwight S.S."/>
            <person name="Hitz B.C."/>
            <person name="Karra K."/>
            <person name="Nash R.S."/>
            <person name="Weng S."/>
            <person name="Wong E.D."/>
            <person name="Lloyd P."/>
            <person name="Skrzypek M.S."/>
            <person name="Miyasato S.R."/>
            <person name="Simison M."/>
            <person name="Cherry J.M."/>
        </authorList>
    </citation>
    <scope>GENOME REANNOTATION</scope>
    <source>
        <strain>ATCC 204508 / S288c</strain>
    </source>
</reference>
<gene>
    <name type="ordered locus">YDL221W</name>
</gene>
<proteinExistence type="uncertain"/>
<comment type="miscellaneous">
    <text evidence="1">Partially overlaps CDC13.</text>
</comment>
<comment type="caution">
    <text evidence="2">Product of a dubious gene prediction unlikely to encode a functional protein. Because of that it is not part of the S.cerevisiae S288c complete/reference proteome set.</text>
</comment>
<organism>
    <name type="scientific">Saccharomyces cerevisiae (strain ATCC 204508 / S288c)</name>
    <name type="common">Baker's yeast</name>
    <dbReference type="NCBI Taxonomy" id="559292"/>
    <lineage>
        <taxon>Eukaryota</taxon>
        <taxon>Fungi</taxon>
        <taxon>Dikarya</taxon>
        <taxon>Ascomycota</taxon>
        <taxon>Saccharomycotina</taxon>
        <taxon>Saccharomycetes</taxon>
        <taxon>Saccharomycetales</taxon>
        <taxon>Saccharomycetaceae</taxon>
        <taxon>Saccharomyces</taxon>
    </lineage>
</organism>
<sequence>MLLPIPDYPCFSIKKEGRPFIDSCFLPLPSFPFPSCENVPLPYIQSTLKFGYLVFFFYITPRRHCNLAPPRWAARIMSYEVGTAPASSSLSSSFFTVTPFCAARSRRGLTVALIAQSRLPESGAAATFGWASCCCNSRKVHSIGHQIWSATVVSGNSVSEEVILNLNEWPRNCANCVYFSSRG</sequence>
<protein>
    <recommendedName>
        <fullName>Putative uncharacterized protein YDL221W</fullName>
    </recommendedName>
</protein>
<name>YD221_YEAST</name>
<accession>Q07649</accession>
<evidence type="ECO:0000305" key="1"/>
<evidence type="ECO:0000305" key="2">
    <source>
    </source>
</evidence>
<feature type="chain" id="PRO_0000299865" description="Putative uncharacterized protein YDL221W">
    <location>
        <begin position="1"/>
        <end position="183"/>
    </location>
</feature>
<dbReference type="EMBL" id="Z74269">
    <property type="protein sequence ID" value="CAA98799.1"/>
    <property type="molecule type" value="Genomic_DNA"/>
</dbReference>
<dbReference type="PIR" id="S67784">
    <property type="entry name" value="S67784"/>
</dbReference>
<dbReference type="DIP" id="DIP-4625N"/>
<dbReference type="PaxDb" id="4932-YDL221W"/>
<dbReference type="EnsemblFungi" id="YDL221W_mRNA">
    <property type="protein sequence ID" value="YDL221W"/>
    <property type="gene ID" value="YDL221W"/>
</dbReference>
<dbReference type="AGR" id="SGD:S000002380"/>
<dbReference type="SGD" id="S000002380">
    <property type="gene designation" value="YDL221W"/>
</dbReference>
<dbReference type="HOGENOM" id="CLU_1476255_0_0_1"/>